<proteinExistence type="evidence at transcript level"/>
<keyword id="KW-0238">DNA-binding</keyword>
<keyword id="KW-0479">Metal-binding</keyword>
<keyword id="KW-0539">Nucleus</keyword>
<keyword id="KW-1185">Reference proteome</keyword>
<keyword id="KW-0804">Transcription</keyword>
<keyword id="KW-0805">Transcription regulation</keyword>
<keyword id="KW-0862">Zinc</keyword>
<comment type="function">
    <text evidence="3 4">Transcription factor that regulates the expression of the gene cluster that mediates the biosynthesis of the isoquinoline alkaloids fumisoquin A, fumisoquin B and fumisoquin C; as well as small amounts of fumipyrrole as a shunt metabolite (PubMed:25582336, PubMed:27065235). The products of the cluster lead to a brown coloration and are important for growth and conidiation (PubMed:25582336).</text>
</comment>
<comment type="subcellular location">
    <subcellularLocation>
        <location evidence="1">Nucleus</location>
    </subcellularLocation>
</comment>
<comment type="induction">
    <text evidence="3">Expression is induced by the cAMP-dependent protein kinase A signaling pathway (PubMed:25582336).</text>
</comment>
<comment type="disruption phenotype">
    <text evidence="3 4">Leads to reduced growth and sporulation, but does not affect virulence in infected mice (PubMed:25582336). Impairs the production of isoquinolines (PubMed:27065235).</text>
</comment>
<protein>
    <recommendedName>
        <fullName evidence="6">C6 finger transcription factor fsqA</fullName>
    </recommendedName>
    <alternativeName>
        <fullName evidence="5">Fumipyrrole biosynthesis protein R</fullName>
    </alternativeName>
    <alternativeName>
        <fullName evidence="6">Fumisoquins biosynthesis protein A</fullName>
    </alternativeName>
</protein>
<reference key="1">
    <citation type="journal article" date="2005" name="Nature">
        <title>Genomic sequence of the pathogenic and allergenic filamentous fungus Aspergillus fumigatus.</title>
        <authorList>
            <person name="Nierman W.C."/>
            <person name="Pain A."/>
            <person name="Anderson M.J."/>
            <person name="Wortman J.R."/>
            <person name="Kim H.S."/>
            <person name="Arroyo J."/>
            <person name="Berriman M."/>
            <person name="Abe K."/>
            <person name="Archer D.B."/>
            <person name="Bermejo C."/>
            <person name="Bennett J.W."/>
            <person name="Bowyer P."/>
            <person name="Chen D."/>
            <person name="Collins M."/>
            <person name="Coulsen R."/>
            <person name="Davies R."/>
            <person name="Dyer P.S."/>
            <person name="Farman M.L."/>
            <person name="Fedorova N."/>
            <person name="Fedorova N.D."/>
            <person name="Feldblyum T.V."/>
            <person name="Fischer R."/>
            <person name="Fosker N."/>
            <person name="Fraser A."/>
            <person name="Garcia J.L."/>
            <person name="Garcia M.J."/>
            <person name="Goble A."/>
            <person name="Goldman G.H."/>
            <person name="Gomi K."/>
            <person name="Griffith-Jones S."/>
            <person name="Gwilliam R."/>
            <person name="Haas B.J."/>
            <person name="Haas H."/>
            <person name="Harris D.E."/>
            <person name="Horiuchi H."/>
            <person name="Huang J."/>
            <person name="Humphray S."/>
            <person name="Jimenez J."/>
            <person name="Keller N."/>
            <person name="Khouri H."/>
            <person name="Kitamoto K."/>
            <person name="Kobayashi T."/>
            <person name="Konzack S."/>
            <person name="Kulkarni R."/>
            <person name="Kumagai T."/>
            <person name="Lafton A."/>
            <person name="Latge J.-P."/>
            <person name="Li W."/>
            <person name="Lord A."/>
            <person name="Lu C."/>
            <person name="Majoros W.H."/>
            <person name="May G.S."/>
            <person name="Miller B.L."/>
            <person name="Mohamoud Y."/>
            <person name="Molina M."/>
            <person name="Monod M."/>
            <person name="Mouyna I."/>
            <person name="Mulligan S."/>
            <person name="Murphy L.D."/>
            <person name="O'Neil S."/>
            <person name="Paulsen I."/>
            <person name="Penalva M.A."/>
            <person name="Pertea M."/>
            <person name="Price C."/>
            <person name="Pritchard B.L."/>
            <person name="Quail M.A."/>
            <person name="Rabbinowitsch E."/>
            <person name="Rawlins N."/>
            <person name="Rajandream M.A."/>
            <person name="Reichard U."/>
            <person name="Renauld H."/>
            <person name="Robson G.D."/>
            <person name="Rodriguez de Cordoba S."/>
            <person name="Rodriguez-Pena J.M."/>
            <person name="Ronning C.M."/>
            <person name="Rutter S."/>
            <person name="Salzberg S.L."/>
            <person name="Sanchez M."/>
            <person name="Sanchez-Ferrero J.C."/>
            <person name="Saunders D."/>
            <person name="Seeger K."/>
            <person name="Squares R."/>
            <person name="Squares S."/>
            <person name="Takeuchi M."/>
            <person name="Tekaia F."/>
            <person name="Turner G."/>
            <person name="Vazquez de Aldana C.R."/>
            <person name="Weidman J."/>
            <person name="White O."/>
            <person name="Woodward J.R."/>
            <person name="Yu J.-H."/>
            <person name="Fraser C.M."/>
            <person name="Galagan J.E."/>
            <person name="Asai K."/>
            <person name="Machida M."/>
            <person name="Hall N."/>
            <person name="Barrell B.G."/>
            <person name="Denning D.W."/>
        </authorList>
    </citation>
    <scope>NUCLEOTIDE SEQUENCE [LARGE SCALE GENOMIC DNA]</scope>
    <source>
        <strain>ATCC MYA-4609 / CBS 101355 / FGSC A1100 / Af293</strain>
    </source>
</reference>
<reference key="2">
    <citation type="journal article" date="2015" name="Mol. Microbiol.">
        <title>Transcriptome analysis of cyclic AMP-dependent protein kinase A-regulated genes reveals the production of the novel natural compound fumipyrrole by Aspergillus fumigatus.</title>
        <authorList>
            <person name="Macheleidt J."/>
            <person name="Scherlach K."/>
            <person name="Neuwirth T."/>
            <person name="Schmidt-Heck W."/>
            <person name="Strassburger M."/>
            <person name="Spraker J."/>
            <person name="Baccile J.A."/>
            <person name="Schroeder F.C."/>
            <person name="Keller N.P."/>
            <person name="Hertweck C."/>
            <person name="Heinekamp T."/>
            <person name="Brakhage A.A."/>
        </authorList>
    </citation>
    <scope>INDUCTION</scope>
    <scope>FUNCTION</scope>
    <scope>DISRUPTION PHENOTYPE</scope>
</reference>
<reference key="3">
    <citation type="journal article" date="2016" name="Nat. Chem. Biol.">
        <title>Plant-like biosynthesis of isoquinoline alkaloids in Aspergillus fumigatus.</title>
        <authorList>
            <person name="Baccile J.A."/>
            <person name="Spraker J.E."/>
            <person name="Le H.H."/>
            <person name="Brandenburger E."/>
            <person name="Gomez C."/>
            <person name="Bok J.W."/>
            <person name="Macheleidt J."/>
            <person name="Brakhage A.A."/>
            <person name="Hoffmeister D."/>
            <person name="Keller N.P."/>
            <person name="Schroeder F.C."/>
        </authorList>
    </citation>
    <scope>FUNCTION</scope>
    <scope>DISRUPTION PHENOTYPE</scope>
</reference>
<name>FSQA_ASPFU</name>
<evidence type="ECO:0000255" key="1">
    <source>
        <dbReference type="PROSITE-ProRule" id="PRU00227"/>
    </source>
</evidence>
<evidence type="ECO:0000256" key="2">
    <source>
        <dbReference type="SAM" id="MobiDB-lite"/>
    </source>
</evidence>
<evidence type="ECO:0000269" key="3">
    <source>
    </source>
</evidence>
<evidence type="ECO:0000269" key="4">
    <source>
    </source>
</evidence>
<evidence type="ECO:0000303" key="5">
    <source>
    </source>
</evidence>
<evidence type="ECO:0000303" key="6">
    <source>
    </source>
</evidence>
<feature type="chain" id="PRO_0000438868" description="C6 finger transcription factor fsqA">
    <location>
        <begin position="1"/>
        <end position="525"/>
    </location>
</feature>
<feature type="DNA-binding region" description="Zn(2)-C6 fungal-type" evidence="1">
    <location>
        <begin position="12"/>
        <end position="53"/>
    </location>
</feature>
<feature type="region of interest" description="Disordered" evidence="2">
    <location>
        <begin position="80"/>
        <end position="142"/>
    </location>
</feature>
<feature type="region of interest" description="Disordered" evidence="2">
    <location>
        <begin position="204"/>
        <end position="260"/>
    </location>
</feature>
<feature type="region of interest" description="Disordered" evidence="2">
    <location>
        <begin position="327"/>
        <end position="371"/>
    </location>
</feature>
<feature type="compositionally biased region" description="Polar residues" evidence="2">
    <location>
        <begin position="95"/>
        <end position="115"/>
    </location>
</feature>
<feature type="compositionally biased region" description="Polar residues" evidence="2">
    <location>
        <begin position="327"/>
        <end position="337"/>
    </location>
</feature>
<organism>
    <name type="scientific">Aspergillus fumigatus (strain ATCC MYA-4609 / CBS 101355 / FGSC A1100 / Af293)</name>
    <name type="common">Neosartorya fumigata</name>
    <dbReference type="NCBI Taxonomy" id="330879"/>
    <lineage>
        <taxon>Eukaryota</taxon>
        <taxon>Fungi</taxon>
        <taxon>Dikarya</taxon>
        <taxon>Ascomycota</taxon>
        <taxon>Pezizomycotina</taxon>
        <taxon>Eurotiomycetes</taxon>
        <taxon>Eurotiomycetidae</taxon>
        <taxon>Eurotiales</taxon>
        <taxon>Aspergillaceae</taxon>
        <taxon>Aspergillus</taxon>
        <taxon>Aspergillus subgen. Fumigati</taxon>
    </lineage>
</organism>
<gene>
    <name evidence="6" type="primary">fsqA</name>
    <name evidence="5" type="synonym">fmpR</name>
    <name type="ORF">AFUA_6G03430</name>
</gene>
<dbReference type="EMBL" id="AAHF01000012">
    <property type="protein sequence ID" value="EAL85696.1"/>
    <property type="molecule type" value="Genomic_DNA"/>
</dbReference>
<dbReference type="RefSeq" id="XP_747734.1">
    <property type="nucleotide sequence ID" value="XM_742641.1"/>
</dbReference>
<dbReference type="STRING" id="330879.Q4WD42"/>
<dbReference type="EnsemblFungi" id="EAL85696">
    <property type="protein sequence ID" value="EAL85696"/>
    <property type="gene ID" value="AFUA_6G03430"/>
</dbReference>
<dbReference type="GeneID" id="3505181"/>
<dbReference type="KEGG" id="afm:AFUA_6G03430"/>
<dbReference type="VEuPathDB" id="FungiDB:Afu6g03430"/>
<dbReference type="eggNOG" id="ENOG502SYRD">
    <property type="taxonomic scope" value="Eukaryota"/>
</dbReference>
<dbReference type="HOGENOM" id="CLU_605645_0_0_1"/>
<dbReference type="InParanoid" id="Q4WD42"/>
<dbReference type="OMA" id="YILQAYE"/>
<dbReference type="OrthoDB" id="4222821at2759"/>
<dbReference type="Proteomes" id="UP000002530">
    <property type="component" value="Chromosome 6"/>
</dbReference>
<dbReference type="GO" id="GO:0005634">
    <property type="term" value="C:nucleus"/>
    <property type="evidence" value="ECO:0007669"/>
    <property type="project" value="UniProtKB-SubCell"/>
</dbReference>
<dbReference type="GO" id="GO:0003677">
    <property type="term" value="F:DNA binding"/>
    <property type="evidence" value="ECO:0007669"/>
    <property type="project" value="UniProtKB-KW"/>
</dbReference>
<dbReference type="GO" id="GO:0000981">
    <property type="term" value="F:DNA-binding transcription factor activity, RNA polymerase II-specific"/>
    <property type="evidence" value="ECO:0007669"/>
    <property type="project" value="InterPro"/>
</dbReference>
<dbReference type="GO" id="GO:0008270">
    <property type="term" value="F:zinc ion binding"/>
    <property type="evidence" value="ECO:0007669"/>
    <property type="project" value="InterPro"/>
</dbReference>
<dbReference type="CDD" id="cd00067">
    <property type="entry name" value="GAL4"/>
    <property type="match status" value="1"/>
</dbReference>
<dbReference type="Gene3D" id="4.10.240.10">
    <property type="entry name" value="Zn(2)-C6 fungal-type DNA-binding domain"/>
    <property type="match status" value="1"/>
</dbReference>
<dbReference type="InterPro" id="IPR036864">
    <property type="entry name" value="Zn2-C6_fun-type_DNA-bd_sf"/>
</dbReference>
<dbReference type="InterPro" id="IPR001138">
    <property type="entry name" value="Zn2Cys6_DnaBD"/>
</dbReference>
<dbReference type="SUPFAM" id="SSF57701">
    <property type="entry name" value="Zn2/Cys6 DNA-binding domain"/>
    <property type="match status" value="1"/>
</dbReference>
<dbReference type="PROSITE" id="PS50048">
    <property type="entry name" value="ZN2_CY6_FUNGAL_2"/>
    <property type="match status" value="1"/>
</dbReference>
<sequence>MMDDKHGRYGACDRCRGQKLRCVGAGKPIPNSSSRLLRNEIPCDRCRRAKVECYSVRPAPRRAASNVKEQMIATQAASERSSSLAYHTSGPVVSPPNSLVTAASKPHPNSLSFNHPRSDAVAAPGGLQTRRQSRDTDSLGDMPSMPHEWMAYLHDHKMDDRQGLGMETPPLIESDLNLSRDPAMDSMHEHNMMMELIHQDHQEEWNSGPPELEAYPDPIVPPNPAPLKARKLTSPDCDDYPYGHTRRSSHTPTQPPEPAGRSCIQELAQFNEMLLRDKCSLEDTSARRGYKDSWLSIGRTLHHCQQFFSILKRIKYSRPDSQLSADRARSQWSSLPEGTSLADGAPTDSPQARRSLARGATPCSSSLARSSSTSSAASTSYLGLSTLLSILFCYTYILQAYEDILTSILHAVTRPTPTIPPTLSGLRIDGFQLDGHHTLQLECLLHVSYNLLEKIENILFGSAGPEELSNPVKYGILGDKLSAGLIDALFEHNETNGLLHCQGKREVAAKRLIREIQAALKQLDL</sequence>
<accession>Q4WD42</accession>